<accession>Q5UXW0</accession>
<name>TRUA_HALMA</name>
<dbReference type="EC" id="5.4.99.12" evidence="1"/>
<dbReference type="EMBL" id="AY596297">
    <property type="protein sequence ID" value="AAV47893.1"/>
    <property type="molecule type" value="Genomic_DNA"/>
</dbReference>
<dbReference type="RefSeq" id="WP_011224661.1">
    <property type="nucleotide sequence ID" value="NC_006396.1"/>
</dbReference>
<dbReference type="SMR" id="Q5UXW0"/>
<dbReference type="STRING" id="272569.rrnAC3188"/>
<dbReference type="PaxDb" id="272569-rrnAC3188"/>
<dbReference type="EnsemblBacteria" id="AAV47893">
    <property type="protein sequence ID" value="AAV47893"/>
    <property type="gene ID" value="rrnAC3188"/>
</dbReference>
<dbReference type="GeneID" id="40153994"/>
<dbReference type="KEGG" id="hma:rrnAC3188"/>
<dbReference type="PATRIC" id="fig|272569.17.peg.3727"/>
<dbReference type="eggNOG" id="arCOG04449">
    <property type="taxonomic scope" value="Archaea"/>
</dbReference>
<dbReference type="HOGENOM" id="CLU_014673_4_2_2"/>
<dbReference type="Proteomes" id="UP000001169">
    <property type="component" value="Chromosome I"/>
</dbReference>
<dbReference type="GO" id="GO:0003723">
    <property type="term" value="F:RNA binding"/>
    <property type="evidence" value="ECO:0007669"/>
    <property type="project" value="InterPro"/>
</dbReference>
<dbReference type="GO" id="GO:0160147">
    <property type="term" value="F:tRNA pseudouridine(38-40) synthase activity"/>
    <property type="evidence" value="ECO:0007669"/>
    <property type="project" value="UniProtKB-EC"/>
</dbReference>
<dbReference type="GO" id="GO:0031119">
    <property type="term" value="P:tRNA pseudouridine synthesis"/>
    <property type="evidence" value="ECO:0007669"/>
    <property type="project" value="UniProtKB-UniRule"/>
</dbReference>
<dbReference type="CDD" id="cd00497">
    <property type="entry name" value="PseudoU_synth_TruA_like"/>
    <property type="match status" value="1"/>
</dbReference>
<dbReference type="Gene3D" id="3.30.70.660">
    <property type="entry name" value="Pseudouridine synthase I, catalytic domain, C-terminal subdomain"/>
    <property type="match status" value="1"/>
</dbReference>
<dbReference type="Gene3D" id="3.30.70.580">
    <property type="entry name" value="Pseudouridine synthase I, catalytic domain, N-terminal subdomain"/>
    <property type="match status" value="1"/>
</dbReference>
<dbReference type="HAMAP" id="MF_00171">
    <property type="entry name" value="TruA"/>
    <property type="match status" value="1"/>
</dbReference>
<dbReference type="InterPro" id="IPR020103">
    <property type="entry name" value="PsdUridine_synth_cat_dom_sf"/>
</dbReference>
<dbReference type="InterPro" id="IPR001406">
    <property type="entry name" value="PsdUridine_synth_TruA"/>
</dbReference>
<dbReference type="InterPro" id="IPR020097">
    <property type="entry name" value="PsdUridine_synth_TruA_a/b_dom"/>
</dbReference>
<dbReference type="InterPro" id="IPR020095">
    <property type="entry name" value="PsdUridine_synth_TruA_C"/>
</dbReference>
<dbReference type="InterPro" id="IPR020094">
    <property type="entry name" value="TruA/RsuA/RluB/E/F_N"/>
</dbReference>
<dbReference type="NCBIfam" id="NF000622">
    <property type="entry name" value="PRK00021.3-3"/>
    <property type="match status" value="1"/>
</dbReference>
<dbReference type="PANTHER" id="PTHR11142">
    <property type="entry name" value="PSEUDOURIDYLATE SYNTHASE"/>
    <property type="match status" value="1"/>
</dbReference>
<dbReference type="PANTHER" id="PTHR11142:SF0">
    <property type="entry name" value="TRNA PSEUDOURIDINE SYNTHASE-LIKE 1"/>
    <property type="match status" value="1"/>
</dbReference>
<dbReference type="Pfam" id="PF01416">
    <property type="entry name" value="PseudoU_synth_1"/>
    <property type="match status" value="1"/>
</dbReference>
<dbReference type="PIRSF" id="PIRSF001430">
    <property type="entry name" value="tRNA_psdUrid_synth"/>
    <property type="match status" value="1"/>
</dbReference>
<dbReference type="SUPFAM" id="SSF55120">
    <property type="entry name" value="Pseudouridine synthase"/>
    <property type="match status" value="1"/>
</dbReference>
<reference key="1">
    <citation type="journal article" date="2004" name="Genome Res.">
        <title>Genome sequence of Haloarcula marismortui: a halophilic archaeon from the Dead Sea.</title>
        <authorList>
            <person name="Baliga N.S."/>
            <person name="Bonneau R."/>
            <person name="Facciotti M.T."/>
            <person name="Pan M."/>
            <person name="Glusman G."/>
            <person name="Deutsch E.W."/>
            <person name="Shannon P."/>
            <person name="Chiu Y."/>
            <person name="Weng R.S."/>
            <person name="Gan R.R."/>
            <person name="Hung P."/>
            <person name="Date S.V."/>
            <person name="Marcotte E."/>
            <person name="Hood L."/>
            <person name="Ng W.V."/>
        </authorList>
    </citation>
    <scope>NUCLEOTIDE SEQUENCE [LARGE SCALE GENOMIC DNA]</scope>
    <source>
        <strain>ATCC 43049 / DSM 3752 / JCM 8966 / VKM B-1809</strain>
    </source>
</reference>
<sequence>MRAYRVAYDGQPYHGFQRQPDVDTVEGRLRSALVRLGVCERGEGLPDRYAAAGRTDAGVSARTQTVAFDAPAWLSPAAFNGELPNDVRVWASADVPEDFHATHDAAERTYTYYLYAPADADRPEHEPVDDGRWADAVDALAGTHDFHNLTTDETGTERTVAIDWTRDGQFLVVQLTAGGFCRQLVRRLVSLAAAVADGSAPLSKVDRILSPEPVSGPDGVPPAPPEPLVLTDVRYPNVSFTRDEDAAVDARTVFARRRATARTTARVADHITDGL</sequence>
<keyword id="KW-0413">Isomerase</keyword>
<keyword id="KW-1185">Reference proteome</keyword>
<keyword id="KW-0819">tRNA processing</keyword>
<proteinExistence type="inferred from homology"/>
<comment type="function">
    <text evidence="1">Formation of pseudouridine at positions 38, 39 and 40 in the anticodon stem and loop of transfer RNAs.</text>
</comment>
<comment type="catalytic activity">
    <reaction evidence="1">
        <text>uridine(38/39/40) in tRNA = pseudouridine(38/39/40) in tRNA</text>
        <dbReference type="Rhea" id="RHEA:22376"/>
        <dbReference type="Rhea" id="RHEA-COMP:10085"/>
        <dbReference type="Rhea" id="RHEA-COMP:10087"/>
        <dbReference type="ChEBI" id="CHEBI:65314"/>
        <dbReference type="ChEBI" id="CHEBI:65315"/>
        <dbReference type="EC" id="5.4.99.12"/>
    </reaction>
</comment>
<comment type="similarity">
    <text evidence="1">Belongs to the tRNA pseudouridine synthase TruA family.</text>
</comment>
<organism>
    <name type="scientific">Haloarcula marismortui (strain ATCC 43049 / DSM 3752 / JCM 8966 / VKM B-1809)</name>
    <name type="common">Halobacterium marismortui</name>
    <dbReference type="NCBI Taxonomy" id="272569"/>
    <lineage>
        <taxon>Archaea</taxon>
        <taxon>Methanobacteriati</taxon>
        <taxon>Methanobacteriota</taxon>
        <taxon>Stenosarchaea group</taxon>
        <taxon>Halobacteria</taxon>
        <taxon>Halobacteriales</taxon>
        <taxon>Haloarculaceae</taxon>
        <taxon>Haloarcula</taxon>
    </lineage>
</organism>
<feature type="chain" id="PRO_0000057500" description="tRNA pseudouridine synthase A">
    <location>
        <begin position="1"/>
        <end position="275"/>
    </location>
</feature>
<feature type="active site" description="Nucleophile" evidence="1">
    <location>
        <position position="56"/>
    </location>
</feature>
<feature type="binding site" evidence="1">
    <location>
        <position position="110"/>
    </location>
    <ligand>
        <name>substrate</name>
    </ligand>
</feature>
<evidence type="ECO:0000255" key="1">
    <source>
        <dbReference type="HAMAP-Rule" id="MF_00171"/>
    </source>
</evidence>
<protein>
    <recommendedName>
        <fullName evidence="1">tRNA pseudouridine synthase A</fullName>
        <ecNumber evidence="1">5.4.99.12</ecNumber>
    </recommendedName>
    <alternativeName>
        <fullName evidence="1">tRNA pseudouridine(38-40) synthase</fullName>
    </alternativeName>
    <alternativeName>
        <fullName evidence="1">tRNA pseudouridylate synthase I</fullName>
    </alternativeName>
    <alternativeName>
        <fullName evidence="1">tRNA-uridine isomerase I</fullName>
    </alternativeName>
</protein>
<gene>
    <name evidence="1" type="primary">truA</name>
    <name type="ordered locus">rrnAC3188</name>
</gene>